<sequence>MPQQKLHVKSGDTVVVISGKDKGKRGKVLRTFPSEQKVLVEGVNMINKHTRATQENPQGGIVEQEGPVYADKVMVYCSKCQKPVRTGAKIDDKGNKSRICKKCGVEL</sequence>
<evidence type="ECO:0000255" key="1">
    <source>
        <dbReference type="HAMAP-Rule" id="MF_01326"/>
    </source>
</evidence>
<evidence type="ECO:0000305" key="2"/>
<gene>
    <name evidence="1" type="primary">rplX</name>
    <name type="ordered locus">Nther_0205</name>
</gene>
<comment type="function">
    <text evidence="1">One of two assembly initiator proteins, it binds directly to the 5'-end of the 23S rRNA, where it nucleates assembly of the 50S subunit.</text>
</comment>
<comment type="function">
    <text evidence="1">One of the proteins that surrounds the polypeptide exit tunnel on the outside of the subunit.</text>
</comment>
<comment type="subunit">
    <text evidence="1">Part of the 50S ribosomal subunit.</text>
</comment>
<comment type="similarity">
    <text evidence="1">Belongs to the universal ribosomal protein uL24 family.</text>
</comment>
<reference key="1">
    <citation type="submission" date="2008-04" db="EMBL/GenBank/DDBJ databases">
        <title>Complete sequence of chromosome of Natranaerobius thermophilus JW/NM-WN-LF.</title>
        <authorList>
            <consortium name="US DOE Joint Genome Institute"/>
            <person name="Copeland A."/>
            <person name="Lucas S."/>
            <person name="Lapidus A."/>
            <person name="Glavina del Rio T."/>
            <person name="Dalin E."/>
            <person name="Tice H."/>
            <person name="Bruce D."/>
            <person name="Goodwin L."/>
            <person name="Pitluck S."/>
            <person name="Chertkov O."/>
            <person name="Brettin T."/>
            <person name="Detter J.C."/>
            <person name="Han C."/>
            <person name="Kuske C.R."/>
            <person name="Schmutz J."/>
            <person name="Larimer F."/>
            <person name="Land M."/>
            <person name="Hauser L."/>
            <person name="Kyrpides N."/>
            <person name="Lykidis A."/>
            <person name="Mesbah N.M."/>
            <person name="Wiegel J."/>
        </authorList>
    </citation>
    <scope>NUCLEOTIDE SEQUENCE [LARGE SCALE GENOMIC DNA]</scope>
    <source>
        <strain>ATCC BAA-1301 / DSM 18059 / JW/NM-WN-LF</strain>
    </source>
</reference>
<protein>
    <recommendedName>
        <fullName evidence="1">Large ribosomal subunit protein uL24</fullName>
    </recommendedName>
    <alternativeName>
        <fullName evidence="2">50S ribosomal protein L24</fullName>
    </alternativeName>
</protein>
<organism>
    <name type="scientific">Natranaerobius thermophilus (strain ATCC BAA-1301 / DSM 18059 / JW/NM-WN-LF)</name>
    <dbReference type="NCBI Taxonomy" id="457570"/>
    <lineage>
        <taxon>Bacteria</taxon>
        <taxon>Bacillati</taxon>
        <taxon>Bacillota</taxon>
        <taxon>Clostridia</taxon>
        <taxon>Natranaerobiales</taxon>
        <taxon>Natranaerobiaceae</taxon>
        <taxon>Natranaerobius</taxon>
    </lineage>
</organism>
<proteinExistence type="inferred from homology"/>
<dbReference type="EMBL" id="CP001034">
    <property type="protein sequence ID" value="ACB83804.1"/>
    <property type="molecule type" value="Genomic_DNA"/>
</dbReference>
<dbReference type="RefSeq" id="WP_012446693.1">
    <property type="nucleotide sequence ID" value="NZ_CP144221.1"/>
</dbReference>
<dbReference type="SMR" id="B2A4F0"/>
<dbReference type="FunCoup" id="B2A4F0">
    <property type="interactions" value="428"/>
</dbReference>
<dbReference type="STRING" id="457570.Nther_0205"/>
<dbReference type="KEGG" id="nth:Nther_0205"/>
<dbReference type="eggNOG" id="COG0198">
    <property type="taxonomic scope" value="Bacteria"/>
</dbReference>
<dbReference type="HOGENOM" id="CLU_093315_2_3_9"/>
<dbReference type="InParanoid" id="B2A4F0"/>
<dbReference type="OrthoDB" id="9807419at2"/>
<dbReference type="Proteomes" id="UP000001683">
    <property type="component" value="Chromosome"/>
</dbReference>
<dbReference type="GO" id="GO:1990904">
    <property type="term" value="C:ribonucleoprotein complex"/>
    <property type="evidence" value="ECO:0007669"/>
    <property type="project" value="UniProtKB-KW"/>
</dbReference>
<dbReference type="GO" id="GO:0005840">
    <property type="term" value="C:ribosome"/>
    <property type="evidence" value="ECO:0007669"/>
    <property type="project" value="UniProtKB-KW"/>
</dbReference>
<dbReference type="GO" id="GO:0019843">
    <property type="term" value="F:rRNA binding"/>
    <property type="evidence" value="ECO:0007669"/>
    <property type="project" value="UniProtKB-UniRule"/>
</dbReference>
<dbReference type="GO" id="GO:0003735">
    <property type="term" value="F:structural constituent of ribosome"/>
    <property type="evidence" value="ECO:0007669"/>
    <property type="project" value="InterPro"/>
</dbReference>
<dbReference type="GO" id="GO:0006412">
    <property type="term" value="P:translation"/>
    <property type="evidence" value="ECO:0007669"/>
    <property type="project" value="UniProtKB-UniRule"/>
</dbReference>
<dbReference type="CDD" id="cd06089">
    <property type="entry name" value="KOW_RPL26"/>
    <property type="match status" value="1"/>
</dbReference>
<dbReference type="FunFam" id="2.30.30.30:FF:000004">
    <property type="entry name" value="50S ribosomal protein L24"/>
    <property type="match status" value="1"/>
</dbReference>
<dbReference type="Gene3D" id="2.30.30.30">
    <property type="match status" value="1"/>
</dbReference>
<dbReference type="HAMAP" id="MF_01326_B">
    <property type="entry name" value="Ribosomal_uL24_B"/>
    <property type="match status" value="1"/>
</dbReference>
<dbReference type="InterPro" id="IPR005824">
    <property type="entry name" value="KOW"/>
</dbReference>
<dbReference type="InterPro" id="IPR014722">
    <property type="entry name" value="Rib_uL2_dom2"/>
</dbReference>
<dbReference type="InterPro" id="IPR003256">
    <property type="entry name" value="Ribosomal_uL24"/>
</dbReference>
<dbReference type="InterPro" id="IPR005825">
    <property type="entry name" value="Ribosomal_uL24_CS"/>
</dbReference>
<dbReference type="InterPro" id="IPR041988">
    <property type="entry name" value="Ribosomal_uL24_KOW"/>
</dbReference>
<dbReference type="InterPro" id="IPR008991">
    <property type="entry name" value="Translation_prot_SH3-like_sf"/>
</dbReference>
<dbReference type="NCBIfam" id="TIGR01079">
    <property type="entry name" value="rplX_bact"/>
    <property type="match status" value="1"/>
</dbReference>
<dbReference type="PANTHER" id="PTHR12903">
    <property type="entry name" value="MITOCHONDRIAL RIBOSOMAL PROTEIN L24"/>
    <property type="match status" value="1"/>
</dbReference>
<dbReference type="Pfam" id="PF00467">
    <property type="entry name" value="KOW"/>
    <property type="match status" value="1"/>
</dbReference>
<dbReference type="Pfam" id="PF17136">
    <property type="entry name" value="ribosomal_L24"/>
    <property type="match status" value="1"/>
</dbReference>
<dbReference type="SMART" id="SM00739">
    <property type="entry name" value="KOW"/>
    <property type="match status" value="1"/>
</dbReference>
<dbReference type="SUPFAM" id="SSF50104">
    <property type="entry name" value="Translation proteins SH3-like domain"/>
    <property type="match status" value="1"/>
</dbReference>
<dbReference type="PROSITE" id="PS01108">
    <property type="entry name" value="RIBOSOMAL_L24"/>
    <property type="match status" value="1"/>
</dbReference>
<feature type="chain" id="PRO_0000355697" description="Large ribosomal subunit protein uL24">
    <location>
        <begin position="1"/>
        <end position="107"/>
    </location>
</feature>
<keyword id="KW-1185">Reference proteome</keyword>
<keyword id="KW-0687">Ribonucleoprotein</keyword>
<keyword id="KW-0689">Ribosomal protein</keyword>
<keyword id="KW-0694">RNA-binding</keyword>
<keyword id="KW-0699">rRNA-binding</keyword>
<accession>B2A4F0</accession>
<name>RL24_NATTJ</name>